<dbReference type="EC" id="1.2.1.19" evidence="1"/>
<dbReference type="EC" id="1.2.1.-" evidence="1"/>
<dbReference type="EMBL" id="AE017220">
    <property type="protein sequence ID" value="AAX65500.1"/>
    <property type="status" value="ALT_INIT"/>
    <property type="molecule type" value="Genomic_DNA"/>
</dbReference>
<dbReference type="SMR" id="Q57P61"/>
<dbReference type="KEGG" id="sec:SCH_1594"/>
<dbReference type="HOGENOM" id="CLU_005391_0_0_6"/>
<dbReference type="UniPathway" id="UPA00188">
    <property type="reaction ID" value="UER00292"/>
</dbReference>
<dbReference type="Proteomes" id="UP000000538">
    <property type="component" value="Chromosome"/>
</dbReference>
<dbReference type="GO" id="GO:0019145">
    <property type="term" value="F:aminobutyraldehyde dehydrogenase (NAD+) activity"/>
    <property type="evidence" value="ECO:0007669"/>
    <property type="project" value="UniProtKB-UniRule"/>
</dbReference>
<dbReference type="GO" id="GO:0051287">
    <property type="term" value="F:NAD binding"/>
    <property type="evidence" value="ECO:0007669"/>
    <property type="project" value="UniProtKB-UniRule"/>
</dbReference>
<dbReference type="GO" id="GO:0019477">
    <property type="term" value="P:L-lysine catabolic process"/>
    <property type="evidence" value="ECO:0007669"/>
    <property type="project" value="UniProtKB-UniRule"/>
</dbReference>
<dbReference type="GO" id="GO:0009447">
    <property type="term" value="P:putrescine catabolic process"/>
    <property type="evidence" value="ECO:0007669"/>
    <property type="project" value="UniProtKB-UniRule"/>
</dbReference>
<dbReference type="CDD" id="cd07092">
    <property type="entry name" value="ALDH_ABALDH-YdcW"/>
    <property type="match status" value="1"/>
</dbReference>
<dbReference type="FunFam" id="3.40.605.10:FF:000001">
    <property type="entry name" value="Aldehyde dehydrogenase 1"/>
    <property type="match status" value="1"/>
</dbReference>
<dbReference type="FunFam" id="3.40.309.10:FF:000010">
    <property type="entry name" value="Gamma-aminobutyraldehyde dehydrogenase"/>
    <property type="match status" value="1"/>
</dbReference>
<dbReference type="Gene3D" id="3.40.605.10">
    <property type="entry name" value="Aldehyde Dehydrogenase, Chain A, domain 1"/>
    <property type="match status" value="1"/>
</dbReference>
<dbReference type="Gene3D" id="3.40.309.10">
    <property type="entry name" value="Aldehyde Dehydrogenase, Chain A, domain 2"/>
    <property type="match status" value="1"/>
</dbReference>
<dbReference type="HAMAP" id="MF_01275">
    <property type="entry name" value="Aldedh_Prr"/>
    <property type="match status" value="1"/>
</dbReference>
<dbReference type="InterPro" id="IPR016161">
    <property type="entry name" value="Ald_DH/histidinol_DH"/>
</dbReference>
<dbReference type="InterPro" id="IPR016163">
    <property type="entry name" value="Ald_DH_C"/>
</dbReference>
<dbReference type="InterPro" id="IPR029510">
    <property type="entry name" value="Ald_DH_CS_GLU"/>
</dbReference>
<dbReference type="InterPro" id="IPR016162">
    <property type="entry name" value="Ald_DH_N"/>
</dbReference>
<dbReference type="InterPro" id="IPR015590">
    <property type="entry name" value="Aldehyde_DH_dom"/>
</dbReference>
<dbReference type="InterPro" id="IPR015657">
    <property type="entry name" value="Aminobutyraldehyde_DH"/>
</dbReference>
<dbReference type="InterPro" id="IPR017749">
    <property type="entry name" value="PatD"/>
</dbReference>
<dbReference type="NCBIfam" id="TIGR03374">
    <property type="entry name" value="ABALDH"/>
    <property type="match status" value="1"/>
</dbReference>
<dbReference type="NCBIfam" id="NF010000">
    <property type="entry name" value="PRK13473.1"/>
    <property type="match status" value="1"/>
</dbReference>
<dbReference type="PANTHER" id="PTHR11699">
    <property type="entry name" value="ALDEHYDE DEHYDROGENASE-RELATED"/>
    <property type="match status" value="1"/>
</dbReference>
<dbReference type="Pfam" id="PF00171">
    <property type="entry name" value="Aldedh"/>
    <property type="match status" value="1"/>
</dbReference>
<dbReference type="SUPFAM" id="SSF53720">
    <property type="entry name" value="ALDH-like"/>
    <property type="match status" value="1"/>
</dbReference>
<dbReference type="PROSITE" id="PS00687">
    <property type="entry name" value="ALDEHYDE_DEHYDR_GLU"/>
    <property type="match status" value="1"/>
</dbReference>
<accession>Q57P61</accession>
<gene>
    <name evidence="1" type="primary">patD</name>
    <name type="ordered locus">SCH_1594</name>
</gene>
<evidence type="ECO:0000255" key="1">
    <source>
        <dbReference type="HAMAP-Rule" id="MF_01275"/>
    </source>
</evidence>
<evidence type="ECO:0000305" key="2"/>
<keyword id="KW-0520">NAD</keyword>
<keyword id="KW-0560">Oxidoreductase</keyword>
<feature type="chain" id="PRO_0000269697" description="Gamma-aminobutyraldehyde dehydrogenase">
    <location>
        <begin position="1"/>
        <end position="474"/>
    </location>
</feature>
<feature type="active site" evidence="1">
    <location>
        <position position="246"/>
    </location>
</feature>
<feature type="active site" description="Nucleophile" evidence="1">
    <location>
        <position position="280"/>
    </location>
</feature>
<feature type="binding site" evidence="1">
    <location>
        <begin position="146"/>
        <end position="148"/>
    </location>
    <ligand>
        <name>NAD(+)</name>
        <dbReference type="ChEBI" id="CHEBI:57540"/>
    </ligand>
</feature>
<feature type="binding site" evidence="1">
    <location>
        <begin position="172"/>
        <end position="175"/>
    </location>
    <ligand>
        <name>NAD(+)</name>
        <dbReference type="ChEBI" id="CHEBI:57540"/>
    </ligand>
</feature>
<feature type="binding site" evidence="1">
    <location>
        <position position="209"/>
    </location>
    <ligand>
        <name>NAD(+)</name>
        <dbReference type="ChEBI" id="CHEBI:57540"/>
    </ligand>
</feature>
<feature type="binding site" evidence="1">
    <location>
        <begin position="225"/>
        <end position="228"/>
    </location>
    <ligand>
        <name>NAD(+)</name>
        <dbReference type="ChEBI" id="CHEBI:57540"/>
    </ligand>
</feature>
<feature type="binding site" evidence="1">
    <location>
        <position position="280"/>
    </location>
    <ligand>
        <name>NAD(+)</name>
        <dbReference type="ChEBI" id="CHEBI:57540"/>
    </ligand>
</feature>
<proteinExistence type="inferred from homology"/>
<reference key="1">
    <citation type="journal article" date="2005" name="Nucleic Acids Res.">
        <title>The genome sequence of Salmonella enterica serovar Choleraesuis, a highly invasive and resistant zoonotic pathogen.</title>
        <authorList>
            <person name="Chiu C.-H."/>
            <person name="Tang P."/>
            <person name="Chu C."/>
            <person name="Hu S."/>
            <person name="Bao Q."/>
            <person name="Yu J."/>
            <person name="Chou Y.-Y."/>
            <person name="Wang H.-S."/>
            <person name="Lee Y.-S."/>
        </authorList>
    </citation>
    <scope>NUCLEOTIDE SEQUENCE [LARGE SCALE GENOMIC DNA]</scope>
    <source>
        <strain>SC-B67</strain>
    </source>
</reference>
<protein>
    <recommendedName>
        <fullName evidence="1">Gamma-aminobutyraldehyde dehydrogenase</fullName>
        <shortName evidence="1">ABALDH</shortName>
        <ecNumber evidence="1">1.2.1.19</ecNumber>
    </recommendedName>
    <alternativeName>
        <fullName evidence="1">1-pyrroline dehydrogenase</fullName>
    </alternativeName>
    <alternativeName>
        <fullName evidence="1">4-aminobutanal dehydrogenase</fullName>
    </alternativeName>
    <alternativeName>
        <fullName evidence="1">5-aminopentanal dehydrogenase</fullName>
        <ecNumber evidence="1">1.2.1.-</ecNumber>
    </alternativeName>
</protein>
<name>ABDH_SALCH</name>
<organism>
    <name type="scientific">Salmonella choleraesuis (strain SC-B67)</name>
    <dbReference type="NCBI Taxonomy" id="321314"/>
    <lineage>
        <taxon>Bacteria</taxon>
        <taxon>Pseudomonadati</taxon>
        <taxon>Pseudomonadota</taxon>
        <taxon>Gammaproteobacteria</taxon>
        <taxon>Enterobacterales</taxon>
        <taxon>Enterobacteriaceae</taxon>
        <taxon>Salmonella</taxon>
    </lineage>
</organism>
<sequence length="474" mass="51093">MQYQLLINGVLVDGEGERQSVYNPATGEVILEIAEASPAQVDAAVLAADSAFAEWGQTTPKARAECLLKLADSIEQNALEFARLESQNCGKPLHCVINDEIPAIVDVFRFFAGAARCLSGLAAGEYLEGHTSMIRRDPIGVVASIAPWNYPLMMAAWKLAPALAAGNCVVIKPSEITPLTALKLAALAKDIFPPGVLNVLFGRGQTVGDVLTGHEKVRMVSLTGSIATGEHILRHTAPAIKRTHMELGGKAPVIVFDDADLDAAAQGVRTFGFYNAGQDCTAACRIYAQRGIYDALVEKLGNAVSSLKMGAPEDESTELGPLSSLAHLKRVTAAVEEAKALSHIRVITGGSQTEGKGYYFAPTLLADAKQEDAIVQREVFGPVVSITVFDDEDQVLRWANDSRYGLASSVWTQDVGRAHRLSARLQYGCTWINTHFMLVSEMPHGGQKQSGYGKDMSLYGLEDYTLVRHIMVKH</sequence>
<comment type="function">
    <text evidence="1">Catalyzes the oxidation 4-aminobutanal (gamma-aminobutyraldehyde) to 4-aminobutanoate (gamma-aminobutyrate or GABA). This is the second step in one of two pathways for putrescine degradation, where putrescine is converted into 4-aminobutanoate via 4-aminobutanal. Also functions as a 5-aminopentanal dehydrogenase in a a L-lysine degradation pathway to succinate that proceeds via cadaverine, glutarate and L-2-hydroxyglutarate.</text>
</comment>
<comment type="catalytic activity">
    <reaction evidence="1">
        <text>4-aminobutanal + NAD(+) + H2O = 4-aminobutanoate + NADH + 2 H(+)</text>
        <dbReference type="Rhea" id="RHEA:19105"/>
        <dbReference type="ChEBI" id="CHEBI:15377"/>
        <dbReference type="ChEBI" id="CHEBI:15378"/>
        <dbReference type="ChEBI" id="CHEBI:57540"/>
        <dbReference type="ChEBI" id="CHEBI:57945"/>
        <dbReference type="ChEBI" id="CHEBI:58264"/>
        <dbReference type="ChEBI" id="CHEBI:59888"/>
        <dbReference type="EC" id="1.2.1.19"/>
    </reaction>
    <physiologicalReaction direction="left-to-right" evidence="1">
        <dbReference type="Rhea" id="RHEA:19106"/>
    </physiologicalReaction>
</comment>
<comment type="catalytic activity">
    <reaction evidence="1">
        <text>5-aminopentanal + NAD(+) + H2O = 5-aminopentanoate + NADH + 2 H(+)</text>
        <dbReference type="Rhea" id="RHEA:61632"/>
        <dbReference type="ChEBI" id="CHEBI:15377"/>
        <dbReference type="ChEBI" id="CHEBI:15378"/>
        <dbReference type="ChEBI" id="CHEBI:57540"/>
        <dbReference type="ChEBI" id="CHEBI:57945"/>
        <dbReference type="ChEBI" id="CHEBI:144896"/>
        <dbReference type="ChEBI" id="CHEBI:356010"/>
    </reaction>
    <physiologicalReaction direction="left-to-right" evidence="1">
        <dbReference type="Rhea" id="RHEA:61633"/>
    </physiologicalReaction>
</comment>
<comment type="pathway">
    <text evidence="1">Amine and polyamine degradation; putrescine degradation; 4-aminobutanoate from 4-aminobutanal: step 1/1.</text>
</comment>
<comment type="pathway">
    <text evidence="1">Amino-acid degradation.</text>
</comment>
<comment type="subunit">
    <text evidence="1">Homotetramer.</text>
</comment>
<comment type="miscellaneous">
    <text evidence="1">4-aminobutanal can spontaneously cyclize to 1-pyrroline, and 5-aminopentanal to 1-piperideine.</text>
</comment>
<comment type="similarity">
    <text evidence="1">Belongs to the aldehyde dehydrogenase family. Gamma-aminobutyraldehyde dehydrogenase subfamily.</text>
</comment>
<comment type="sequence caution" evidence="2">
    <conflict type="erroneous initiation">
        <sequence resource="EMBL-CDS" id="AAX65500"/>
    </conflict>
</comment>